<feature type="chain" id="PRO_0000449879" description="Cytosolic triacylglycerol lipase" evidence="15">
    <location>
        <begin position="1"/>
        <end position="437"/>
    </location>
</feature>
<feature type="chain" id="PRO_0000438268" description="Extracellular triacylglycerol lipase" evidence="18">
    <location>
        <begin position="150"/>
        <end position="437"/>
    </location>
</feature>
<feature type="domain" description="PE" evidence="3 17">
    <location>
        <begin position="1"/>
        <end position="100"/>
    </location>
</feature>
<feature type="region of interest" description="Linker" evidence="17">
    <location>
        <begin position="101"/>
        <end position="206"/>
    </location>
</feature>
<feature type="region of interest" description="Lipase" evidence="17">
    <location>
        <begin position="207"/>
        <end position="437"/>
    </location>
</feature>
<feature type="short sequence motif" description="Involved in the stabilization of the negatively charged intermediate by the formation of the oxyanion hole" evidence="2">
    <location>
        <begin position="239"/>
        <end position="241"/>
    </location>
</feature>
<feature type="active site" evidence="16">
    <location>
        <position position="309"/>
    </location>
</feature>
<feature type="active site" evidence="1">
    <location>
        <position position="383"/>
    </location>
</feature>
<feature type="active site" evidence="1">
    <location>
        <position position="413"/>
    </location>
</feature>
<feature type="site" description="Cleavage" evidence="6">
    <location>
        <begin position="149"/>
        <end position="150"/>
    </location>
</feature>
<evidence type="ECO:0000250" key="1">
    <source>
        <dbReference type="UniProtKB" id="O06350"/>
    </source>
</evidence>
<evidence type="ECO:0000250" key="2">
    <source>
        <dbReference type="UniProtKB" id="Q5NUF3"/>
    </source>
</evidence>
<evidence type="ECO:0000255" key="3"/>
<evidence type="ECO:0000269" key="4">
    <source>
    </source>
</evidence>
<evidence type="ECO:0000269" key="5">
    <source>
    </source>
</evidence>
<evidence type="ECO:0000269" key="6">
    <source>
    </source>
</evidence>
<evidence type="ECO:0000269" key="7">
    <source>
    </source>
</evidence>
<evidence type="ECO:0000269" key="8">
    <source>
    </source>
</evidence>
<evidence type="ECO:0000269" key="9">
    <source>
    </source>
</evidence>
<evidence type="ECO:0000269" key="10">
    <source>
    </source>
</evidence>
<evidence type="ECO:0000269" key="11">
    <source>
    </source>
</evidence>
<evidence type="ECO:0000269" key="12">
    <source>
    </source>
</evidence>
<evidence type="ECO:0000269" key="13">
    <source>
    </source>
</evidence>
<evidence type="ECO:0000303" key="14">
    <source>
    </source>
</evidence>
<evidence type="ECO:0000305" key="15"/>
<evidence type="ECO:0000305" key="16">
    <source>
    </source>
</evidence>
<evidence type="ECO:0000305" key="17">
    <source>
    </source>
</evidence>
<evidence type="ECO:0000305" key="18">
    <source>
    </source>
</evidence>
<accession>I6Y2J4</accession>
<dbReference type="EC" id="3.1.1.3" evidence="4"/>
<dbReference type="EMBL" id="AL123456">
    <property type="protein sequence ID" value="CCP45906.1"/>
    <property type="molecule type" value="Genomic_DNA"/>
</dbReference>
<dbReference type="RefSeq" id="WP_003912072.1">
    <property type="nucleotide sequence ID" value="NZ_NVQJ01000011.1"/>
</dbReference>
<dbReference type="RefSeq" id="YP_177924.1">
    <property type="nucleotide sequence ID" value="NC_000962.3"/>
</dbReference>
<dbReference type="SMR" id="I6Y2J4"/>
<dbReference type="STRING" id="83332.Rv3097c"/>
<dbReference type="SwissLipids" id="SLP:000001333"/>
<dbReference type="ESTHER" id="myctu-Rv3097c">
    <property type="family name" value="Hormone-sensitive_lipase_like"/>
</dbReference>
<dbReference type="PaxDb" id="83332-Rv3097c"/>
<dbReference type="DNASU" id="888677"/>
<dbReference type="GeneID" id="888677"/>
<dbReference type="KEGG" id="mtu:Rv3097c"/>
<dbReference type="KEGG" id="mtv:RVBD_3097c"/>
<dbReference type="PATRIC" id="fig|83332.111.peg.3450"/>
<dbReference type="TubercuList" id="Rv3097c"/>
<dbReference type="eggNOG" id="COG0657">
    <property type="taxonomic scope" value="Bacteria"/>
</dbReference>
<dbReference type="HOGENOM" id="CLU_036802_0_0_11"/>
<dbReference type="InParanoid" id="I6Y2J4"/>
<dbReference type="OrthoDB" id="9803828at2"/>
<dbReference type="Proteomes" id="UP000001584">
    <property type="component" value="Chromosome"/>
</dbReference>
<dbReference type="GO" id="GO:0009986">
    <property type="term" value="C:cell surface"/>
    <property type="evidence" value="ECO:0007669"/>
    <property type="project" value="UniProtKB-SubCell"/>
</dbReference>
<dbReference type="GO" id="GO:0005737">
    <property type="term" value="C:cytoplasm"/>
    <property type="evidence" value="ECO:0007669"/>
    <property type="project" value="UniProtKB-SubCell"/>
</dbReference>
<dbReference type="GO" id="GO:0005576">
    <property type="term" value="C:extracellular region"/>
    <property type="evidence" value="ECO:0007669"/>
    <property type="project" value="UniProtKB-SubCell"/>
</dbReference>
<dbReference type="GO" id="GO:0008126">
    <property type="term" value="F:acetylesterase activity"/>
    <property type="evidence" value="ECO:0007669"/>
    <property type="project" value="RHEA"/>
</dbReference>
<dbReference type="GO" id="GO:0004806">
    <property type="term" value="F:triacylglycerol lipase activity"/>
    <property type="evidence" value="ECO:0000314"/>
    <property type="project" value="UniProtKB"/>
</dbReference>
<dbReference type="GO" id="GO:0016042">
    <property type="term" value="P:lipid catabolic process"/>
    <property type="evidence" value="ECO:0007669"/>
    <property type="project" value="UniProtKB-KW"/>
</dbReference>
<dbReference type="FunFam" id="3.40.50.1820:FF:000241">
    <property type="entry name" value="LipY"/>
    <property type="match status" value="1"/>
</dbReference>
<dbReference type="FunFam" id="1.10.287.850:FF:000001">
    <property type="entry name" value="PE_PGRS39"/>
    <property type="match status" value="1"/>
</dbReference>
<dbReference type="Gene3D" id="3.40.50.1820">
    <property type="entry name" value="alpha/beta hydrolase"/>
    <property type="match status" value="1"/>
</dbReference>
<dbReference type="Gene3D" id="1.10.287.850">
    <property type="entry name" value="HP0062-like domain"/>
    <property type="match status" value="1"/>
</dbReference>
<dbReference type="InterPro" id="IPR013094">
    <property type="entry name" value="AB_hydrolase_3"/>
</dbReference>
<dbReference type="InterPro" id="IPR029058">
    <property type="entry name" value="AB_hydrolase_fold"/>
</dbReference>
<dbReference type="InterPro" id="IPR050300">
    <property type="entry name" value="GDXG_lipolytic_enzyme"/>
</dbReference>
<dbReference type="InterPro" id="IPR000084">
    <property type="entry name" value="PE-PGRS_N"/>
</dbReference>
<dbReference type="PANTHER" id="PTHR48081">
    <property type="entry name" value="AB HYDROLASE SUPERFAMILY PROTEIN C4A8.06C"/>
    <property type="match status" value="1"/>
</dbReference>
<dbReference type="PANTHER" id="PTHR48081:SF8">
    <property type="entry name" value="ALPHA_BETA HYDROLASE FOLD-3 DOMAIN-CONTAINING PROTEIN-RELATED"/>
    <property type="match status" value="1"/>
</dbReference>
<dbReference type="Pfam" id="PF07859">
    <property type="entry name" value="Abhydrolase_3"/>
    <property type="match status" value="1"/>
</dbReference>
<dbReference type="Pfam" id="PF00934">
    <property type="entry name" value="PE"/>
    <property type="match status" value="1"/>
</dbReference>
<dbReference type="SUPFAM" id="SSF53474">
    <property type="entry name" value="alpha/beta-Hydrolases"/>
    <property type="match status" value="1"/>
</dbReference>
<dbReference type="SUPFAM" id="SSF140459">
    <property type="entry name" value="PE/PPE dimer-like"/>
    <property type="match status" value="1"/>
</dbReference>
<gene>
    <name evidence="14" type="primary">lipY</name>
    <name evidence="14" type="synonym">PE-PGRS63</name>
    <name type="ordered locus">Rv3097c</name>
</gene>
<keyword id="KW-0134">Cell wall</keyword>
<keyword id="KW-0963">Cytoplasm</keyword>
<keyword id="KW-0378">Hydrolase</keyword>
<keyword id="KW-0442">Lipid degradation</keyword>
<keyword id="KW-0443">Lipid metabolism</keyword>
<keyword id="KW-1185">Reference proteome</keyword>
<keyword id="KW-0964">Secreted</keyword>
<keyword id="KW-0843">Virulence</keyword>
<protein>
    <recommendedName>
        <fullName evidence="14">Triacylglycerol lipase</fullName>
        <ecNumber evidence="4">3.1.1.3</ecNumber>
    </recommendedName>
    <alternativeName>
        <fullName evidence="14">Esterase/lipase</fullName>
    </alternativeName>
    <alternativeName>
        <fullName evidence="16">Triolein hydrolase</fullName>
    </alternativeName>
    <component>
        <recommendedName>
            <fullName evidence="15">Cytosolic triacylglycerol lipase</fullName>
        </recommendedName>
    </component>
    <component>
        <recommendedName>
            <fullName evidence="15">Extracellular triacylglycerol lipase</fullName>
        </recommendedName>
    </component>
</protein>
<reference key="1">
    <citation type="journal article" date="1998" name="Nature">
        <title>Deciphering the biology of Mycobacterium tuberculosis from the complete genome sequence.</title>
        <authorList>
            <person name="Cole S.T."/>
            <person name="Brosch R."/>
            <person name="Parkhill J."/>
            <person name="Garnier T."/>
            <person name="Churcher C.M."/>
            <person name="Harris D.E."/>
            <person name="Gordon S.V."/>
            <person name="Eiglmeier K."/>
            <person name="Gas S."/>
            <person name="Barry C.E. III"/>
            <person name="Tekaia F."/>
            <person name="Badcock K."/>
            <person name="Basham D."/>
            <person name="Brown D."/>
            <person name="Chillingworth T."/>
            <person name="Connor R."/>
            <person name="Davies R.M."/>
            <person name="Devlin K."/>
            <person name="Feltwell T."/>
            <person name="Gentles S."/>
            <person name="Hamlin N."/>
            <person name="Holroyd S."/>
            <person name="Hornsby T."/>
            <person name="Jagels K."/>
            <person name="Krogh A."/>
            <person name="McLean J."/>
            <person name="Moule S."/>
            <person name="Murphy L.D."/>
            <person name="Oliver S."/>
            <person name="Osborne J."/>
            <person name="Quail M.A."/>
            <person name="Rajandream M.A."/>
            <person name="Rogers J."/>
            <person name="Rutter S."/>
            <person name="Seeger K."/>
            <person name="Skelton S."/>
            <person name="Squares S."/>
            <person name="Squares R."/>
            <person name="Sulston J.E."/>
            <person name="Taylor K."/>
            <person name="Whitehead S."/>
            <person name="Barrell B.G."/>
        </authorList>
    </citation>
    <scope>NUCLEOTIDE SEQUENCE [LARGE SCALE GENOMIC DNA]</scope>
    <source>
        <strain>ATCC 25618 / H37Rv</strain>
    </source>
</reference>
<reference key="2">
    <citation type="journal article" date="2006" name="J. Biol. Chem.">
        <title>A novel lipase belonging to the hormone-sensitive lipase family induced under starvation to utilize stored triacylglycerol in Mycobacterium tuberculosis.</title>
        <authorList>
            <person name="Deb C."/>
            <person name="Daniel J."/>
            <person name="Sirakova T.D."/>
            <person name="Abomoelak B."/>
            <person name="Dubey V.S."/>
            <person name="Kolattukudy P.E."/>
        </authorList>
    </citation>
    <scope>FUNCTION</scope>
    <scope>CATALYTIC ACTIVITY</scope>
    <scope>BIOPHYSICOCHEMICAL PROPERTIES</scope>
    <scope>ACTIVITY REGULATION</scope>
    <scope>DISRUPTION PHENOTYPE</scope>
    <scope>ACTIVE SITE</scope>
    <source>
        <strain>ATCC 27294 / TMC 102 / H37Rv</strain>
    </source>
</reference>
<reference key="3">
    <citation type="journal article" date="2008" name="Infect. Immun.">
        <title>Functional role of the PE domain and immunogenicity of the Mycobacterium tuberculosis triacylglycerol hydrolase LipY.</title>
        <authorList>
            <person name="Mishra K.C."/>
            <person name="de Chastellier C."/>
            <person name="Narayana Y."/>
            <person name="Bifani P."/>
            <person name="Brown A.K."/>
            <person name="Besra G.S."/>
            <person name="Katoch V.M."/>
            <person name="Joshi B."/>
            <person name="Balaji K.N."/>
            <person name="Kremer L."/>
        </authorList>
    </citation>
    <scope>FUNCTION</scope>
    <scope>ACTIVITY REGULATION</scope>
    <scope>SUBCELLULAR LOCATION</scope>
    <scope>DOMAIN</scope>
</reference>
<reference key="4">
    <citation type="journal article" date="2011" name="J. Biol. Chem.">
        <title>Conserved Pro-Glu (PE) and Pro-Pro-Glu (PPE) protein domains target LipY lipases of pathogenic mycobacteria to the cell surface via the ESX-5 pathway.</title>
        <authorList>
            <person name="Daleke M.H."/>
            <person name="Cascioferro A."/>
            <person name="de Punder K."/>
            <person name="Ummels R."/>
            <person name="Abdallah A.M."/>
            <person name="van der Wel N."/>
            <person name="Peters P.J."/>
            <person name="Luirink J."/>
            <person name="Manganelli R."/>
            <person name="Bitter W."/>
        </authorList>
    </citation>
    <scope>FUNCTION</scope>
    <scope>SUBCELLULAR LOCATION</scope>
    <scope>DOMAIN</scope>
    <scope>PROTEOLYTIC CLEAVAGE</scope>
</reference>
<reference key="5">
    <citation type="journal article" date="2013" name="Int. J. Antimicrob. Agents">
        <title>Identification and characterisation of small-molecule inhibitors of Rv3097c-encoded lipase (LipY) of Mycobacterium tuberculosis that selectively inhibit growth of bacilli in hypoxia.</title>
        <authorList>
            <person name="Saxena A.K."/>
            <person name="Roy K.K."/>
            <person name="Singh S."/>
            <person name="Vishnoi S.P."/>
            <person name="Kumar A."/>
            <person name="Kashyap V.K."/>
            <person name="Kremer L."/>
            <person name="Srivastava R."/>
            <person name="Srivastava B.S."/>
        </authorList>
    </citation>
    <scope>FUNCTION</scope>
    <scope>CATALYTIC ACTIVITY</scope>
    <scope>ACTIVITY REGULATION</scope>
    <source>
        <strain>H37Rv</strain>
    </source>
</reference>
<reference key="6">
    <citation type="journal article" date="2014" name="Tuberculosis">
        <title>Increased virulence of Mycobacterium tuberculosis H37Rv overexpressing LipY in a murine model.</title>
        <authorList>
            <person name="Singh V.K."/>
            <person name="Srivastava M."/>
            <person name="Dasgupta A."/>
            <person name="Singh M.P."/>
            <person name="Srivastava R."/>
            <person name="Srivastava B.S."/>
        </authorList>
    </citation>
    <scope>FUNCTION IN VIRULENCE</scope>
    <scope>OVEREXPRESSION</scope>
</reference>
<reference key="7">
    <citation type="journal article" date="2015" name="PLoS ONE">
        <title>Modulation of the activity of Mycobacterium tuberculosis LipY by its PE domain.</title>
        <authorList>
            <person name="Garrett C.K."/>
            <person name="Broadwell L.J."/>
            <person name="Hayne C.K."/>
            <person name="Neher S.B."/>
        </authorList>
    </citation>
    <scope>ACTIVITY REGULATION</scope>
    <scope>SUBUNIT</scope>
    <scope>DOMAIN</scope>
</reference>
<reference key="8">
    <citation type="journal article" date="2015" name="PLoS ONE">
        <title>Identification and characterization of lipase activity and immunogenicity of LipL from Mycobacterium tuberculosis.</title>
        <authorList>
            <person name="Cao J."/>
            <person name="Dang G."/>
            <person name="Li H."/>
            <person name="Li T."/>
            <person name="Yue Z."/>
            <person name="Li N."/>
            <person name="Liu Y."/>
            <person name="Liu S."/>
            <person name="Chen L."/>
        </authorList>
    </citation>
    <scope>FUNCTION</scope>
    <scope>CATALYTIC ACTIVITY</scope>
</reference>
<reference key="9">
    <citation type="journal article" date="2018" name="Infect. Immun.">
        <title>Delineating the physiological roles of the PE and catalytic domains of LipY in lipid consumption in Mycobacterium-infected foamy macrophages.</title>
        <authorList>
            <person name="Santucci P."/>
            <person name="Diomande S."/>
            <person name="Poncin I."/>
            <person name="Alibaud L."/>
            <person name="Viljoen A."/>
            <person name="Kremer L."/>
            <person name="de Chastellier C."/>
            <person name="Canaan S."/>
        </authorList>
    </citation>
    <scope>FUNCTION</scope>
    <scope>CATALYTIC ACTIVITY</scope>
    <scope>ACTIVITY REGULATION</scope>
    <scope>SUBCELLULAR LOCATION</scope>
</reference>
<reference key="10">
    <citation type="journal article" date="2019" name="FEBS J.">
        <title>Dissecting the membrane lipid binding properties and lipase activity of Mycobacterium tuberculosis LipY domains.</title>
        <authorList>
            <person name="Santucci P."/>
            <person name="Smichi N."/>
            <person name="Diomande S."/>
            <person name="Poncin I."/>
            <person name="Point V."/>
            <person name="Gaussier H."/>
            <person name="Cavalier J.F."/>
            <person name="Kremer L."/>
            <person name="Canaan S."/>
        </authorList>
    </citation>
    <scope>FUNCTION</scope>
    <scope>CATALYTIC ACTIVITY</scope>
    <scope>ACTIVITY REGULATION</scope>
    <scope>SUBCELLULAR LOCATION</scope>
</reference>
<reference key="11">
    <citation type="journal article" date="2019" name="MBio">
        <title>Type VII secretion substrates of pathogenic Mycobacteria are processed by a surface protease.</title>
        <authorList>
            <person name="Burggraaf M.J."/>
            <person name="Speer A."/>
            <person name="Meijers A.S."/>
            <person name="Ummels R."/>
            <person name="van der Sar A.M."/>
            <person name="Korotkov K.V."/>
            <person name="Bitter W."/>
            <person name="Kuijl C."/>
        </authorList>
    </citation>
    <scope>PROTEOLYTIC CLEAVAGE</scope>
    <scope>ACTIVITY REGULATION</scope>
    <scope>SUBCELLULAR LOCATION</scope>
</reference>
<organism>
    <name type="scientific">Mycobacterium tuberculosis (strain ATCC 25618 / H37Rv)</name>
    <dbReference type="NCBI Taxonomy" id="83332"/>
    <lineage>
        <taxon>Bacteria</taxon>
        <taxon>Bacillati</taxon>
        <taxon>Actinomycetota</taxon>
        <taxon>Actinomycetes</taxon>
        <taxon>Mycobacteriales</taxon>
        <taxon>Mycobacteriaceae</taxon>
        <taxon>Mycobacterium</taxon>
        <taxon>Mycobacterium tuberculosis complex</taxon>
    </lineage>
</organism>
<name>LIPY_MYCTU</name>
<sequence>MVSYVVALPEVMSAAATDVASIGSVVATASQGVAGATTTVLAAAEDEVSAAIAALFSGHGQDYQALSAQLAVFHERFVQALTGAAKGYAAAELANASLLQSEFASGIGNGFATIHQEIQRAPTALAAGFTQVPPFAAAQAGIFTGTPSGAAGFDIASLWPVKPLLSLSALETHFAIPNNPLLALIASDIPPLSWFLGNSPPPLLNSLLGQTVQYTTYDGMSVVQITPAHPTGEYVVAIHGGAFILPPSIFHWLNYSVTAYQTGATVQVPIYPLVQEGGTAGTVVPAMAGLISTQIAQHGVSNVSVVGDSAGGNLALAAAQYMVSQGNPVPSSMVLLSPWLDVGTWQISQAWAGNLAVNDPLVSPLYGSLNGLPPTYVYSGSLDPLAQQAVVLEHTAVVQGAPFSFVLAPWQIHDWILLTPWGLLSWPQINQQLGIAA</sequence>
<proteinExistence type="evidence at protein level"/>
<comment type="function">
    <text evidence="4 5 6 7 8 10 11 12">Catalyzes the hydrolysis of both intracellular and extracellular triacylglycerol (TAG) (PubMed:16354661, PubMed:17938218, PubMed:21471225, PubMed:29986895, PubMed:31034693). In vitro, can also hydrolyze p-nitrophenyl (pNP) esters with various chain lengths, including pNP-acetate (C2), pNP-butyrate (C4), pNP-caproate (C6), pNP-caprylate (C8), pNP-laurate (C12), pNP-myristate (C14), pNP-palmitate (C16) and pNP-stearate (C18) (PubMed:23684389, PubMed:26398213). Also hydrolyzes monobutyrin, tributyrin and trioctanoin (PubMed:29986895). Overexpression results in increase of virulence characterized by reduced survival of infected mouse and increased burden of bacilli in the lungs (PubMed:24631199). Hydrolyzes internal or host-derived TAG depending on its localization (PubMed:29986895).</text>
</comment>
<comment type="function">
    <molecule>Cytosolic triacylglycerol lipase</molecule>
    <text evidence="4 11">Hydrolyzes TAG that accumulates within mycobacterial intracytosolic lipid inclusions (ILI) (PubMed:29986895). Probably responsible for the utilization of stored long-chain TAG during the dormancy and reactivation stages of the pathogen (PubMed:16354661).</text>
</comment>
<comment type="function">
    <molecule>Extracellular triacylglycerol lipase</molecule>
    <text evidence="11">Hydrolyzes host-derived TAG.</text>
</comment>
<comment type="catalytic activity">
    <reaction evidence="4">
        <text>a triacylglycerol + H2O = a diacylglycerol + a fatty acid + H(+)</text>
        <dbReference type="Rhea" id="RHEA:12044"/>
        <dbReference type="ChEBI" id="CHEBI:15377"/>
        <dbReference type="ChEBI" id="CHEBI:15378"/>
        <dbReference type="ChEBI" id="CHEBI:17855"/>
        <dbReference type="ChEBI" id="CHEBI:18035"/>
        <dbReference type="ChEBI" id="CHEBI:28868"/>
        <dbReference type="EC" id="3.1.1.3"/>
    </reaction>
</comment>
<comment type="catalytic activity">
    <reaction evidence="4 12">
        <text>1,2,3-tri-(9Z-octadecenoyl)-glycerol + H2O = di-(9Z)-octadecenoylglycerol + (9Z)-octadecenoate + H(+)</text>
        <dbReference type="Rhea" id="RHEA:38575"/>
        <dbReference type="ChEBI" id="CHEBI:15377"/>
        <dbReference type="ChEBI" id="CHEBI:15378"/>
        <dbReference type="ChEBI" id="CHEBI:30823"/>
        <dbReference type="ChEBI" id="CHEBI:53753"/>
        <dbReference type="ChEBI" id="CHEBI:75945"/>
    </reaction>
</comment>
<comment type="catalytic activity">
    <reaction evidence="10">
        <text>an acetyl ester + H2O = an aliphatic alcohol + acetate + H(+)</text>
        <dbReference type="Rhea" id="RHEA:12957"/>
        <dbReference type="ChEBI" id="CHEBI:2571"/>
        <dbReference type="ChEBI" id="CHEBI:15377"/>
        <dbReference type="ChEBI" id="CHEBI:15378"/>
        <dbReference type="ChEBI" id="CHEBI:30089"/>
        <dbReference type="ChEBI" id="CHEBI:47622"/>
    </reaction>
</comment>
<comment type="catalytic activity">
    <reaction evidence="10">
        <text>a butanoate ester + H2O = an aliphatic alcohol + butanoate + H(+)</text>
        <dbReference type="Rhea" id="RHEA:47348"/>
        <dbReference type="ChEBI" id="CHEBI:2571"/>
        <dbReference type="ChEBI" id="CHEBI:15377"/>
        <dbReference type="ChEBI" id="CHEBI:15378"/>
        <dbReference type="ChEBI" id="CHEBI:17968"/>
        <dbReference type="ChEBI" id="CHEBI:50477"/>
    </reaction>
</comment>
<comment type="catalytic activity">
    <reaction evidence="10">
        <text>a hexanoate ester + H2O = an aliphatic alcohol + hexanoate + H(+)</text>
        <dbReference type="Rhea" id="RHEA:47352"/>
        <dbReference type="ChEBI" id="CHEBI:2571"/>
        <dbReference type="ChEBI" id="CHEBI:15377"/>
        <dbReference type="ChEBI" id="CHEBI:15378"/>
        <dbReference type="ChEBI" id="CHEBI:17120"/>
        <dbReference type="ChEBI" id="CHEBI:87656"/>
    </reaction>
</comment>
<comment type="catalytic activity">
    <reaction evidence="10">
        <text>an octanoate ester + H2O = an aliphatic alcohol + octanoate + H(+)</text>
        <dbReference type="Rhea" id="RHEA:47356"/>
        <dbReference type="ChEBI" id="CHEBI:2571"/>
        <dbReference type="ChEBI" id="CHEBI:15377"/>
        <dbReference type="ChEBI" id="CHEBI:15378"/>
        <dbReference type="ChEBI" id="CHEBI:25646"/>
        <dbReference type="ChEBI" id="CHEBI:87657"/>
    </reaction>
</comment>
<comment type="catalytic activity">
    <reaction evidence="10">
        <text>a dodecanoate ester + H2O = an aliphatic alcohol + dodecanoate + H(+)</text>
        <dbReference type="Rhea" id="RHEA:47364"/>
        <dbReference type="ChEBI" id="CHEBI:2571"/>
        <dbReference type="ChEBI" id="CHEBI:15377"/>
        <dbReference type="ChEBI" id="CHEBI:15378"/>
        <dbReference type="ChEBI" id="CHEBI:18262"/>
        <dbReference type="ChEBI" id="CHEBI:87659"/>
    </reaction>
</comment>
<comment type="catalytic activity">
    <reaction evidence="10">
        <text>a tetradecanoate ester + H2O = an aliphatic alcohol + tetradecanoate + H(+)</text>
        <dbReference type="Rhea" id="RHEA:47388"/>
        <dbReference type="ChEBI" id="CHEBI:2571"/>
        <dbReference type="ChEBI" id="CHEBI:15377"/>
        <dbReference type="ChEBI" id="CHEBI:15378"/>
        <dbReference type="ChEBI" id="CHEBI:30807"/>
        <dbReference type="ChEBI" id="CHEBI:87691"/>
    </reaction>
</comment>
<comment type="catalytic activity">
    <reaction evidence="10">
        <text>hexadecanoate ester + H2O = an aliphatic alcohol + hexadecanoate + H(+)</text>
        <dbReference type="Rhea" id="RHEA:47392"/>
        <dbReference type="ChEBI" id="CHEBI:2571"/>
        <dbReference type="ChEBI" id="CHEBI:7896"/>
        <dbReference type="ChEBI" id="CHEBI:15377"/>
        <dbReference type="ChEBI" id="CHEBI:15378"/>
        <dbReference type="ChEBI" id="CHEBI:25835"/>
    </reaction>
</comment>
<comment type="catalytic activity">
    <reaction evidence="7 10">
        <text>octadecanoate ester + H2O = an aliphatic alcohol + octadecanoate + H(+)</text>
        <dbReference type="Rhea" id="RHEA:47396"/>
        <dbReference type="ChEBI" id="CHEBI:2571"/>
        <dbReference type="ChEBI" id="CHEBI:15377"/>
        <dbReference type="ChEBI" id="CHEBI:15378"/>
        <dbReference type="ChEBI" id="CHEBI:25629"/>
        <dbReference type="ChEBI" id="CHEBI:75925"/>
    </reaction>
</comment>
<comment type="catalytic activity">
    <reaction evidence="11">
        <text>1-butyrylglycerol + H2O = butanoate + glycerol + H(+)</text>
        <dbReference type="Rhea" id="RHEA:44324"/>
        <dbReference type="ChEBI" id="CHEBI:15377"/>
        <dbReference type="ChEBI" id="CHEBI:15378"/>
        <dbReference type="ChEBI" id="CHEBI:17754"/>
        <dbReference type="ChEBI" id="CHEBI:17968"/>
        <dbReference type="ChEBI" id="CHEBI:76503"/>
    </reaction>
</comment>
<comment type="catalytic activity">
    <reaction evidence="11 12">
        <text>1,2,3-tributanoylglycerol + H2O = dibutanoylglycerol + butanoate + H(+)</text>
        <dbReference type="Rhea" id="RHEA:40475"/>
        <dbReference type="ChEBI" id="CHEBI:15377"/>
        <dbReference type="ChEBI" id="CHEBI:15378"/>
        <dbReference type="ChEBI" id="CHEBI:17968"/>
        <dbReference type="ChEBI" id="CHEBI:35020"/>
        <dbReference type="ChEBI" id="CHEBI:76478"/>
    </reaction>
</comment>
<comment type="activity regulation">
    <molecule>Cytosolic triacylglycerol lipase</molecule>
    <text evidence="5 9 11 12">PE domain down-regulates lipase activity.</text>
</comment>
<comment type="activity regulation">
    <molecule>Extracellular triacylglycerol lipase</molecule>
    <text evidence="13">Cleavage by PecA does not affect surface localization and lipase activity.</text>
</comment>
<comment type="activity regulation">
    <text evidence="4 7">Inhibited by diethyl-p-nitrophenyl phosphate (E-600) at 0.5 uM, by phenylmethanesulfonyl fluoride at 5 mM and by polyethylene glycol sorbitan monolaurate (Tween 20). Also inhibited by CaCl(2), CoCl(2), MnCl(2), ZnCl(2) and MgCl(2) (PubMed:16354661). Inhibited by several hydrazides compounds (PubMed:23684389). Stimulated slightly by SDS at concentrations up to 2 mM, above which the activity is severely inhibited (PubMed:16354661).</text>
</comment>
<comment type="biophysicochemical properties">
    <kinetics>
        <KM evidence="4">7.57 mM for triolein (glyceryl trioleate)</KM>
        <Vmax evidence="4">653.3 nmol/min/mg enzyme with triolein (glyceryl trioleate) as substrate</Vmax>
    </kinetics>
    <phDependence>
        <text evidence="4">Optimum pH is between 8 and 9.</text>
    </phDependence>
</comment>
<comment type="subunit">
    <molecule>Cytosolic triacylglycerol lipase</molecule>
    <text evidence="9">Forms aggregates via its PE domain.</text>
</comment>
<comment type="subcellular location">
    <molecule>Cytosolic triacylglycerol lipase</molecule>
    <subcellularLocation>
        <location evidence="11">Cytoplasm</location>
    </subcellularLocation>
</comment>
<comment type="subcellular location">
    <molecule>Extracellular triacylglycerol lipase</molecule>
    <subcellularLocation>
        <location evidence="6 11 12 13">Secreted</location>
    </subcellularLocation>
    <subcellularLocation>
        <location evidence="5 11 12">Secreted</location>
        <location evidence="5 11 12">Cell wall</location>
    </subcellularLocation>
    <subcellularLocation>
        <location evidence="5 6 11 12 13">Cell surface</location>
    </subcellularLocation>
    <text evidence="6 12 13">Exported to the cell surface via the ESX-5 / type VII secretion system (T7SS).</text>
</comment>
<comment type="domain">
    <text evidence="5 6 9">Contains an N-terminal PE domain and a C-terminal catalytic domain, which are connected by a linker region (PubMed:17938218). The PE domain is involved in aggregation and activity regulation (PubMed:26270534). It is also required for ESX-5-dependent secretion (PubMed:21471225). After transport, the PE domain is removed by proteolytic cleavage (PubMed:21471225).</text>
</comment>
<comment type="PTM">
    <text evidence="6 13">Upon export, the PE domain is removed by proteolytic cleavage (PubMed:21471225, PubMed:31662454). Cleavage occurs at the cell surface and is not required for secretion (PubMed:31662454). Cleaved after Gly-149 by the aspartic protease PecA. May also be cleaved before Leu-98 and after Ala-136 (PubMed:31662454).</text>
</comment>
<comment type="disruption phenotype">
    <text evidence="4">Cells lacking this gene show a drastically diminished ability to hydrolyze stored long-chain triacylglycerol.</text>
</comment>
<comment type="similarity">
    <text evidence="15">In the N-terminal section; belongs to the mycobacterial PE family. PGRS subfamily.</text>
</comment>
<comment type="similarity">
    <text evidence="15">In the C-terminal section; belongs to the 'GDXG' lipolytic enzyme family.</text>
</comment>